<gene>
    <name evidence="1" type="primary">bioW</name>
    <name type="ordered locus">RBAM_018290</name>
</gene>
<feature type="chain" id="PRO_0000412076" description="6-carboxyhexanoate--CoA ligase">
    <location>
        <begin position="1"/>
        <end position="256"/>
    </location>
</feature>
<sequence length="256" mass="28862">MREETYYSVRMRASRNAPHEQGGKHISGGERLITYSGLQEAVDGLLHKGFSHSRGIPDFMQIQLESINEPIETIRPLPVAFHQSDTPEKGQAIARKLLQKAGIPPHMIEKAYENIAEYAEARGAVLFDIRAGERIDGRGNRGVRVSRMDWPSHDFQKWAFTHNMPENSRIKEAHAIAAKVCAHPGIIAELCWSDDPDYITGYVAAKKLGYQRIAKMKNAGDESGCRIFFTDGSIDTESCIHFLEKQPVFIQREENI</sequence>
<protein>
    <recommendedName>
        <fullName evidence="1">6-carboxyhexanoate--CoA ligase</fullName>
        <ecNumber evidence="1">6.2.1.14</ecNumber>
    </recommendedName>
    <alternativeName>
        <fullName evidence="1">Pimeloyl-CoA synthase</fullName>
    </alternativeName>
</protein>
<accession>A7Z5B6</accession>
<organism>
    <name type="scientific">Bacillus velezensis (strain DSM 23117 / BGSC 10A6 / LMG 26770 / FZB42)</name>
    <name type="common">Bacillus amyloliquefaciens subsp. plantarum</name>
    <dbReference type="NCBI Taxonomy" id="326423"/>
    <lineage>
        <taxon>Bacteria</taxon>
        <taxon>Bacillati</taxon>
        <taxon>Bacillota</taxon>
        <taxon>Bacilli</taxon>
        <taxon>Bacillales</taxon>
        <taxon>Bacillaceae</taxon>
        <taxon>Bacillus</taxon>
        <taxon>Bacillus amyloliquefaciens group</taxon>
    </lineage>
</organism>
<comment type="function">
    <text evidence="1">Catalyzes the transformation of pimelate into pimeloyl-CoA with concomitant hydrolysis of ATP to AMP.</text>
</comment>
<comment type="catalytic activity">
    <reaction evidence="1">
        <text>heptanedioate + ATP + CoA = 6-carboxyhexanoyl-CoA + AMP + diphosphate</text>
        <dbReference type="Rhea" id="RHEA:14781"/>
        <dbReference type="ChEBI" id="CHEBI:30616"/>
        <dbReference type="ChEBI" id="CHEBI:33019"/>
        <dbReference type="ChEBI" id="CHEBI:36165"/>
        <dbReference type="ChEBI" id="CHEBI:57287"/>
        <dbReference type="ChEBI" id="CHEBI:57360"/>
        <dbReference type="ChEBI" id="CHEBI:456215"/>
        <dbReference type="EC" id="6.2.1.14"/>
    </reaction>
</comment>
<comment type="cofactor">
    <cofactor evidence="1">
        <name>Mg(2+)</name>
        <dbReference type="ChEBI" id="CHEBI:18420"/>
    </cofactor>
</comment>
<comment type="pathway">
    <text evidence="1">Metabolic intermediate metabolism; pimeloyl-CoA biosynthesis; pimeloyl-CoA from pimelate: step 1/1.</text>
</comment>
<comment type="subunit">
    <text evidence="1">Homodimer.</text>
</comment>
<comment type="similarity">
    <text evidence="1">Belongs to the BioW family.</text>
</comment>
<keyword id="KW-0067">ATP-binding</keyword>
<keyword id="KW-0093">Biotin biosynthesis</keyword>
<keyword id="KW-0436">Ligase</keyword>
<keyword id="KW-0460">Magnesium</keyword>
<keyword id="KW-0547">Nucleotide-binding</keyword>
<dbReference type="EC" id="6.2.1.14" evidence="1"/>
<dbReference type="EMBL" id="CP000560">
    <property type="protein sequence ID" value="ABS74192.1"/>
    <property type="molecule type" value="Genomic_DNA"/>
</dbReference>
<dbReference type="RefSeq" id="WP_012117688.1">
    <property type="nucleotide sequence ID" value="NC_009725.2"/>
</dbReference>
<dbReference type="SMR" id="A7Z5B6"/>
<dbReference type="GeneID" id="93080958"/>
<dbReference type="KEGG" id="bay:RBAM_018290"/>
<dbReference type="HOGENOM" id="CLU_076858_0_0_9"/>
<dbReference type="UniPathway" id="UPA00999">
    <property type="reaction ID" value="UER00351"/>
</dbReference>
<dbReference type="Proteomes" id="UP000001120">
    <property type="component" value="Chromosome"/>
</dbReference>
<dbReference type="GO" id="GO:0042410">
    <property type="term" value="F:6-carboxyhexanoate-CoA ligase activity"/>
    <property type="evidence" value="ECO:0007669"/>
    <property type="project" value="UniProtKB-UniRule"/>
</dbReference>
<dbReference type="GO" id="GO:0005524">
    <property type="term" value="F:ATP binding"/>
    <property type="evidence" value="ECO:0007669"/>
    <property type="project" value="UniProtKB-KW"/>
</dbReference>
<dbReference type="GO" id="GO:0000287">
    <property type="term" value="F:magnesium ion binding"/>
    <property type="evidence" value="ECO:0007669"/>
    <property type="project" value="UniProtKB-UniRule"/>
</dbReference>
<dbReference type="GO" id="GO:0009102">
    <property type="term" value="P:biotin biosynthetic process"/>
    <property type="evidence" value="ECO:0007669"/>
    <property type="project" value="UniProtKB-UniRule"/>
</dbReference>
<dbReference type="HAMAP" id="MF_00668">
    <property type="entry name" value="BioW"/>
    <property type="match status" value="1"/>
</dbReference>
<dbReference type="InterPro" id="IPR005499">
    <property type="entry name" value="BioW"/>
</dbReference>
<dbReference type="NCBIfam" id="TIGR01204">
    <property type="entry name" value="bioW"/>
    <property type="match status" value="1"/>
</dbReference>
<dbReference type="NCBIfam" id="NF002360">
    <property type="entry name" value="PRK01322.1"/>
    <property type="match status" value="1"/>
</dbReference>
<dbReference type="Pfam" id="PF03744">
    <property type="entry name" value="BioW"/>
    <property type="match status" value="1"/>
</dbReference>
<proteinExistence type="inferred from homology"/>
<evidence type="ECO:0000255" key="1">
    <source>
        <dbReference type="HAMAP-Rule" id="MF_00668"/>
    </source>
</evidence>
<name>BIOW_BACVZ</name>
<reference key="1">
    <citation type="journal article" date="2007" name="Nat. Biotechnol.">
        <title>Comparative analysis of the complete genome sequence of the plant growth-promoting bacterium Bacillus amyloliquefaciens FZB42.</title>
        <authorList>
            <person name="Chen X.H."/>
            <person name="Koumoutsi A."/>
            <person name="Scholz R."/>
            <person name="Eisenreich A."/>
            <person name="Schneider K."/>
            <person name="Heinemeyer I."/>
            <person name="Morgenstern B."/>
            <person name="Voss B."/>
            <person name="Hess W.R."/>
            <person name="Reva O."/>
            <person name="Junge H."/>
            <person name="Voigt B."/>
            <person name="Jungblut P.R."/>
            <person name="Vater J."/>
            <person name="Suessmuth R."/>
            <person name="Liesegang H."/>
            <person name="Strittmatter A."/>
            <person name="Gottschalk G."/>
            <person name="Borriss R."/>
        </authorList>
    </citation>
    <scope>NUCLEOTIDE SEQUENCE [LARGE SCALE GENOMIC DNA]</scope>
    <source>
        <strain>DSM 23117 / BGSC 10A6 / LMG 26770 / FZB42</strain>
    </source>
</reference>